<name>LPLA_SALTI</name>
<reference key="1">
    <citation type="journal article" date="2001" name="Nature">
        <title>Complete genome sequence of a multiple drug resistant Salmonella enterica serovar Typhi CT18.</title>
        <authorList>
            <person name="Parkhill J."/>
            <person name="Dougan G."/>
            <person name="James K.D."/>
            <person name="Thomson N.R."/>
            <person name="Pickard D."/>
            <person name="Wain J."/>
            <person name="Churcher C.M."/>
            <person name="Mungall K.L."/>
            <person name="Bentley S.D."/>
            <person name="Holden M.T.G."/>
            <person name="Sebaihia M."/>
            <person name="Baker S."/>
            <person name="Basham D."/>
            <person name="Brooks K."/>
            <person name="Chillingworth T."/>
            <person name="Connerton P."/>
            <person name="Cronin A."/>
            <person name="Davis P."/>
            <person name="Davies R.M."/>
            <person name="Dowd L."/>
            <person name="White N."/>
            <person name="Farrar J."/>
            <person name="Feltwell T."/>
            <person name="Hamlin N."/>
            <person name="Haque A."/>
            <person name="Hien T.T."/>
            <person name="Holroyd S."/>
            <person name="Jagels K."/>
            <person name="Krogh A."/>
            <person name="Larsen T.S."/>
            <person name="Leather S."/>
            <person name="Moule S."/>
            <person name="O'Gaora P."/>
            <person name="Parry C."/>
            <person name="Quail M.A."/>
            <person name="Rutherford K.M."/>
            <person name="Simmonds M."/>
            <person name="Skelton J."/>
            <person name="Stevens K."/>
            <person name="Whitehead S."/>
            <person name="Barrell B.G."/>
        </authorList>
    </citation>
    <scope>NUCLEOTIDE SEQUENCE [LARGE SCALE GENOMIC DNA]</scope>
    <source>
        <strain>CT18</strain>
    </source>
</reference>
<reference key="2">
    <citation type="journal article" date="2003" name="J. Bacteriol.">
        <title>Comparative genomics of Salmonella enterica serovar Typhi strains Ty2 and CT18.</title>
        <authorList>
            <person name="Deng W."/>
            <person name="Liou S.-R."/>
            <person name="Plunkett G. III"/>
            <person name="Mayhew G.F."/>
            <person name="Rose D.J."/>
            <person name="Burland V."/>
            <person name="Kodoyianni V."/>
            <person name="Schwartz D.C."/>
            <person name="Blattner F.R."/>
        </authorList>
    </citation>
    <scope>NUCLEOTIDE SEQUENCE [LARGE SCALE GENOMIC DNA]</scope>
    <source>
        <strain>ATCC 700931 / Ty2</strain>
    </source>
</reference>
<dbReference type="EC" id="6.3.1.20" evidence="1"/>
<dbReference type="EMBL" id="AL513382">
    <property type="protein sequence ID" value="CAD03407.1"/>
    <property type="molecule type" value="Genomic_DNA"/>
</dbReference>
<dbReference type="EMBL" id="AE014613">
    <property type="protein sequence ID" value="AAO72047.1"/>
    <property type="molecule type" value="Genomic_DNA"/>
</dbReference>
<dbReference type="RefSeq" id="NP_458984.1">
    <property type="nucleotide sequence ID" value="NC_003198.1"/>
</dbReference>
<dbReference type="RefSeq" id="WP_000209755.1">
    <property type="nucleotide sequence ID" value="NZ_WSUR01000014.1"/>
</dbReference>
<dbReference type="SMR" id="Q8Z0U0"/>
<dbReference type="STRING" id="220341.gene:17588741"/>
<dbReference type="KEGG" id="stt:t4615"/>
<dbReference type="KEGG" id="sty:STY4923"/>
<dbReference type="PATRIC" id="fig|220341.7.peg.5044"/>
<dbReference type="eggNOG" id="COG0095">
    <property type="taxonomic scope" value="Bacteria"/>
</dbReference>
<dbReference type="HOGENOM" id="CLU_022986_0_1_6"/>
<dbReference type="OMA" id="RYQNWDW"/>
<dbReference type="OrthoDB" id="9787898at2"/>
<dbReference type="UniPathway" id="UPA00537">
    <property type="reaction ID" value="UER00594"/>
</dbReference>
<dbReference type="UniPathway" id="UPA00537">
    <property type="reaction ID" value="UER00595"/>
</dbReference>
<dbReference type="Proteomes" id="UP000000541">
    <property type="component" value="Chromosome"/>
</dbReference>
<dbReference type="Proteomes" id="UP000002670">
    <property type="component" value="Chromosome"/>
</dbReference>
<dbReference type="GO" id="GO:0005829">
    <property type="term" value="C:cytosol"/>
    <property type="evidence" value="ECO:0007669"/>
    <property type="project" value="TreeGrafter"/>
</dbReference>
<dbReference type="GO" id="GO:0005524">
    <property type="term" value="F:ATP binding"/>
    <property type="evidence" value="ECO:0007669"/>
    <property type="project" value="UniProtKB-KW"/>
</dbReference>
<dbReference type="GO" id="GO:0016979">
    <property type="term" value="F:lipoate-protein ligase activity"/>
    <property type="evidence" value="ECO:0007669"/>
    <property type="project" value="UniProtKB-UniRule"/>
</dbReference>
<dbReference type="GO" id="GO:0017118">
    <property type="term" value="F:lipoyltransferase activity"/>
    <property type="evidence" value="ECO:0007669"/>
    <property type="project" value="TreeGrafter"/>
</dbReference>
<dbReference type="GO" id="GO:0036211">
    <property type="term" value="P:protein modification process"/>
    <property type="evidence" value="ECO:0007669"/>
    <property type="project" value="InterPro"/>
</dbReference>
<dbReference type="CDD" id="cd16443">
    <property type="entry name" value="LplA"/>
    <property type="match status" value="1"/>
</dbReference>
<dbReference type="FunFam" id="3.30.390.50:FF:000002">
    <property type="entry name" value="Lipoate-protein ligase A"/>
    <property type="match status" value="1"/>
</dbReference>
<dbReference type="FunFam" id="3.30.930.10:FF:000024">
    <property type="entry name" value="Lipoate-protein ligase A"/>
    <property type="match status" value="1"/>
</dbReference>
<dbReference type="Gene3D" id="3.30.930.10">
    <property type="entry name" value="Bira Bifunctional Protein, Domain 2"/>
    <property type="match status" value="1"/>
</dbReference>
<dbReference type="Gene3D" id="3.30.390.50">
    <property type="entry name" value="CO dehydrogenase flavoprotein, C-terminal domain"/>
    <property type="match status" value="1"/>
</dbReference>
<dbReference type="HAMAP" id="MF_01602">
    <property type="entry name" value="LplA"/>
    <property type="match status" value="1"/>
</dbReference>
<dbReference type="InterPro" id="IPR045864">
    <property type="entry name" value="aa-tRNA-synth_II/BPL/LPL"/>
</dbReference>
<dbReference type="InterPro" id="IPR004143">
    <property type="entry name" value="BPL_LPL_catalytic"/>
</dbReference>
<dbReference type="InterPro" id="IPR023741">
    <property type="entry name" value="Lipoate_ligase_A"/>
</dbReference>
<dbReference type="InterPro" id="IPR019491">
    <property type="entry name" value="Lipoate_protein_ligase_C"/>
</dbReference>
<dbReference type="InterPro" id="IPR004562">
    <property type="entry name" value="LipoylTrfase_LipoateP_Ligase"/>
</dbReference>
<dbReference type="NCBIfam" id="TIGR00545">
    <property type="entry name" value="lipoyltrans"/>
    <property type="match status" value="1"/>
</dbReference>
<dbReference type="PANTHER" id="PTHR12561">
    <property type="entry name" value="LIPOATE-PROTEIN LIGASE"/>
    <property type="match status" value="1"/>
</dbReference>
<dbReference type="PANTHER" id="PTHR12561:SF3">
    <property type="entry name" value="LIPOYLTRANSFERASE 1, MITOCHONDRIAL"/>
    <property type="match status" value="1"/>
</dbReference>
<dbReference type="Pfam" id="PF10437">
    <property type="entry name" value="Lip_prot_lig_C"/>
    <property type="match status" value="1"/>
</dbReference>
<dbReference type="Pfam" id="PF21948">
    <property type="entry name" value="LplA-B_cat"/>
    <property type="match status" value="1"/>
</dbReference>
<dbReference type="SUPFAM" id="SSF55681">
    <property type="entry name" value="Class II aaRS and biotin synthetases"/>
    <property type="match status" value="1"/>
</dbReference>
<dbReference type="SUPFAM" id="SSF82649">
    <property type="entry name" value="SufE/NifU"/>
    <property type="match status" value="1"/>
</dbReference>
<dbReference type="PROSITE" id="PS51733">
    <property type="entry name" value="BPL_LPL_CATALYTIC"/>
    <property type="match status" value="1"/>
</dbReference>
<protein>
    <recommendedName>
        <fullName evidence="1">Lipoate-protein ligase A</fullName>
        <ecNumber evidence="1">6.3.1.20</ecNumber>
    </recommendedName>
    <alternativeName>
        <fullName evidence="1">Lipoate--protein ligase</fullName>
    </alternativeName>
</protein>
<evidence type="ECO:0000255" key="1">
    <source>
        <dbReference type="HAMAP-Rule" id="MF_01602"/>
    </source>
</evidence>
<evidence type="ECO:0000255" key="2">
    <source>
        <dbReference type="PROSITE-ProRule" id="PRU01067"/>
    </source>
</evidence>
<organism>
    <name type="scientific">Salmonella typhi</name>
    <dbReference type="NCBI Taxonomy" id="90370"/>
    <lineage>
        <taxon>Bacteria</taxon>
        <taxon>Pseudomonadati</taxon>
        <taxon>Pseudomonadota</taxon>
        <taxon>Gammaproteobacteria</taxon>
        <taxon>Enterobacterales</taxon>
        <taxon>Enterobacteriaceae</taxon>
        <taxon>Salmonella</taxon>
    </lineage>
</organism>
<gene>
    <name evidence="1" type="primary">lplA</name>
    <name type="ordered locus">STY4923</name>
    <name type="ordered locus">t4615</name>
</gene>
<keyword id="KW-0067">ATP-binding</keyword>
<keyword id="KW-0963">Cytoplasm</keyword>
<keyword id="KW-0436">Ligase</keyword>
<keyword id="KW-0547">Nucleotide-binding</keyword>
<feature type="chain" id="PRO_0000209569" description="Lipoate-protein ligase A">
    <location>
        <begin position="1"/>
        <end position="338"/>
    </location>
</feature>
<feature type="domain" description="BPL/LPL catalytic" evidence="2">
    <location>
        <begin position="29"/>
        <end position="216"/>
    </location>
</feature>
<feature type="binding site" evidence="1">
    <location>
        <position position="71"/>
    </location>
    <ligand>
        <name>ATP</name>
        <dbReference type="ChEBI" id="CHEBI:30616"/>
    </ligand>
</feature>
<feature type="binding site" evidence="1">
    <location>
        <begin position="76"/>
        <end position="79"/>
    </location>
    <ligand>
        <name>ATP</name>
        <dbReference type="ChEBI" id="CHEBI:30616"/>
    </ligand>
</feature>
<feature type="binding site" evidence="1">
    <location>
        <position position="134"/>
    </location>
    <ligand>
        <name>(R)-lipoate</name>
        <dbReference type="ChEBI" id="CHEBI:83088"/>
    </ligand>
</feature>
<feature type="binding site" evidence="1">
    <location>
        <position position="134"/>
    </location>
    <ligand>
        <name>ATP</name>
        <dbReference type="ChEBI" id="CHEBI:30616"/>
    </ligand>
</feature>
<accession>Q8Z0U0</accession>
<comment type="function">
    <text evidence="1">Catalyzes both the ATP-dependent activation of exogenously supplied lipoate to lipoyl-AMP and the transfer of the activated lipoyl onto the lipoyl domains of lipoate-dependent enzymes.</text>
</comment>
<comment type="catalytic activity">
    <reaction evidence="1">
        <text>L-lysyl-[lipoyl-carrier protein] + (R)-lipoate + ATP = N(6)-[(R)-lipoyl]-L-lysyl-[lipoyl-carrier protein] + AMP + diphosphate + H(+)</text>
        <dbReference type="Rhea" id="RHEA:49288"/>
        <dbReference type="Rhea" id="RHEA-COMP:10500"/>
        <dbReference type="Rhea" id="RHEA-COMP:10502"/>
        <dbReference type="ChEBI" id="CHEBI:15378"/>
        <dbReference type="ChEBI" id="CHEBI:29969"/>
        <dbReference type="ChEBI" id="CHEBI:30616"/>
        <dbReference type="ChEBI" id="CHEBI:33019"/>
        <dbReference type="ChEBI" id="CHEBI:83088"/>
        <dbReference type="ChEBI" id="CHEBI:83099"/>
        <dbReference type="ChEBI" id="CHEBI:456215"/>
        <dbReference type="EC" id="6.3.1.20"/>
    </reaction>
</comment>
<comment type="pathway">
    <text evidence="1">Protein modification; protein lipoylation via exogenous pathway; protein N(6)-(lipoyl)lysine from lipoate: step 1/2.</text>
</comment>
<comment type="pathway">
    <text evidence="1">Protein modification; protein lipoylation via exogenous pathway; protein N(6)-(lipoyl)lysine from lipoate: step 2/2.</text>
</comment>
<comment type="subunit">
    <text evidence="1">Monomer.</text>
</comment>
<comment type="subcellular location">
    <subcellularLocation>
        <location evidence="1">Cytoplasm</location>
    </subcellularLocation>
</comment>
<comment type="miscellaneous">
    <text evidence="1">In the transfer reaction, the free carboxyl group of lipoic acid is attached via an amide linkage to the epsilon-amino group of a specific lysine residue of lipoyl domains of lipoate-dependent enzymes.</text>
</comment>
<comment type="similarity">
    <text evidence="1">Belongs to the LplA family.</text>
</comment>
<sequence length="338" mass="37780">MTTLRLLISDSYDPWFNLAVEECIFRQMPATQRVLFLWRNADTVVIGRAQNPWKECNTRRMEEDNVRLARRSSGGGAVFHDLGNTCFTFMAGKPEYDKTISTHIVLAALNSLGVMADASGRNDLVVKTPDGDRKVSGSAYRETKDRGFHHGTLLLNADLSRLANYLNPDKKKLAAKGITSVRSRVANLTELLPGITHEQVCQAVTEAFFAHYGERIDAEVISPDKTPDLPNFTETFARQSSWEWNFGQAPAFSHLLDERFTWGGVELHFDVEKGVITRAQAFTDSLNPAPLEALAGRLQGCQYRADKLQETCEALIATFPEQESELRELANWVAGAVR</sequence>
<proteinExistence type="inferred from homology"/>